<keyword id="KW-0963">Cytoplasm</keyword>
<keyword id="KW-1185">Reference proteome</keyword>
<keyword id="KW-0694">RNA-binding</keyword>
<dbReference type="EMBL" id="AE016826">
    <property type="protein sequence ID" value="AAO26962.1"/>
    <property type="molecule type" value="Genomic_DNA"/>
</dbReference>
<dbReference type="RefSeq" id="WP_011091363.1">
    <property type="nucleotide sequence ID" value="NC_004545.1"/>
</dbReference>
<dbReference type="SMR" id="Q89AM9"/>
<dbReference type="STRING" id="224915.bbp_235"/>
<dbReference type="KEGG" id="bab:bbp_235"/>
<dbReference type="eggNOG" id="COG0691">
    <property type="taxonomic scope" value="Bacteria"/>
</dbReference>
<dbReference type="HOGENOM" id="CLU_108953_3_0_6"/>
<dbReference type="OrthoDB" id="9805462at2"/>
<dbReference type="Proteomes" id="UP000000601">
    <property type="component" value="Chromosome"/>
</dbReference>
<dbReference type="GO" id="GO:0005829">
    <property type="term" value="C:cytosol"/>
    <property type="evidence" value="ECO:0007669"/>
    <property type="project" value="TreeGrafter"/>
</dbReference>
<dbReference type="GO" id="GO:0003723">
    <property type="term" value="F:RNA binding"/>
    <property type="evidence" value="ECO:0007669"/>
    <property type="project" value="UniProtKB-UniRule"/>
</dbReference>
<dbReference type="GO" id="GO:0070929">
    <property type="term" value="P:trans-translation"/>
    <property type="evidence" value="ECO:0007669"/>
    <property type="project" value="UniProtKB-UniRule"/>
</dbReference>
<dbReference type="CDD" id="cd09294">
    <property type="entry name" value="SmpB"/>
    <property type="match status" value="1"/>
</dbReference>
<dbReference type="Gene3D" id="2.40.280.10">
    <property type="match status" value="1"/>
</dbReference>
<dbReference type="HAMAP" id="MF_00023">
    <property type="entry name" value="SmpB"/>
    <property type="match status" value="1"/>
</dbReference>
<dbReference type="InterPro" id="IPR023620">
    <property type="entry name" value="SmpB"/>
</dbReference>
<dbReference type="InterPro" id="IPR000037">
    <property type="entry name" value="SsrA-bd_prot"/>
</dbReference>
<dbReference type="InterPro" id="IPR020081">
    <property type="entry name" value="SsrA-bd_prot_CS"/>
</dbReference>
<dbReference type="NCBIfam" id="NF003843">
    <property type="entry name" value="PRK05422.1"/>
    <property type="match status" value="1"/>
</dbReference>
<dbReference type="NCBIfam" id="TIGR00086">
    <property type="entry name" value="smpB"/>
    <property type="match status" value="1"/>
</dbReference>
<dbReference type="PANTHER" id="PTHR30308:SF2">
    <property type="entry name" value="SSRA-BINDING PROTEIN"/>
    <property type="match status" value="1"/>
</dbReference>
<dbReference type="PANTHER" id="PTHR30308">
    <property type="entry name" value="TMRNA-BINDING COMPONENT OF TRANS-TRANSLATION TAGGING COMPLEX"/>
    <property type="match status" value="1"/>
</dbReference>
<dbReference type="Pfam" id="PF01668">
    <property type="entry name" value="SmpB"/>
    <property type="match status" value="1"/>
</dbReference>
<dbReference type="SUPFAM" id="SSF74982">
    <property type="entry name" value="Small protein B (SmpB)"/>
    <property type="match status" value="1"/>
</dbReference>
<dbReference type="PROSITE" id="PS01317">
    <property type="entry name" value="SSRP"/>
    <property type="match status" value="1"/>
</dbReference>
<reference key="1">
    <citation type="journal article" date="2003" name="Proc. Natl. Acad. Sci. U.S.A.">
        <title>Reductive genome evolution in Buchnera aphidicola.</title>
        <authorList>
            <person name="van Ham R.C.H.J."/>
            <person name="Kamerbeek J."/>
            <person name="Palacios C."/>
            <person name="Rausell C."/>
            <person name="Abascal F."/>
            <person name="Bastolla U."/>
            <person name="Fernandez J.M."/>
            <person name="Jimenez L."/>
            <person name="Postigo M."/>
            <person name="Silva F.J."/>
            <person name="Tamames J."/>
            <person name="Viguera E."/>
            <person name="Latorre A."/>
            <person name="Valencia A."/>
            <person name="Moran F."/>
            <person name="Moya A."/>
        </authorList>
    </citation>
    <scope>NUCLEOTIDE SEQUENCE [LARGE SCALE GENOMIC DNA]</scope>
    <source>
        <strain>Bp</strain>
    </source>
</reference>
<protein>
    <recommendedName>
        <fullName evidence="1">SsrA-binding protein</fullName>
    </recommendedName>
    <alternativeName>
        <fullName evidence="1">Small protein B</fullName>
    </alternativeName>
</protein>
<evidence type="ECO:0000255" key="1">
    <source>
        <dbReference type="HAMAP-Rule" id="MF_00023"/>
    </source>
</evidence>
<comment type="function">
    <text evidence="1">Required for rescue of stalled ribosomes mediated by trans-translation. Binds to transfer-messenger RNA (tmRNA), required for stable association of tmRNA with ribosomes. tmRNA and SmpB together mimic tRNA shape, replacing the anticodon stem-loop with SmpB. tmRNA is encoded by the ssrA gene; the 2 termini fold to resemble tRNA(Ala) and it encodes a 'tag peptide', a short internal open reading frame. During trans-translation Ala-aminoacylated tmRNA acts like a tRNA, entering the A-site of stalled ribosomes, displacing the stalled mRNA. The ribosome then switches to translate the ORF on the tmRNA; the nascent peptide is terminated with the 'tag peptide' encoded by the tmRNA and targeted for degradation. The ribosome is freed to recommence translation, which seems to be the essential function of trans-translation.</text>
</comment>
<comment type="subcellular location">
    <subcellularLocation>
        <location evidence="1">Cytoplasm</location>
    </subcellularLocation>
    <text evidence="1">The tmRNA-SmpB complex associates with stalled 70S ribosomes.</text>
</comment>
<comment type="similarity">
    <text evidence="1">Belongs to the SmpB family.</text>
</comment>
<sequence length="158" mass="18839">MKRNSNRKPNEICINRKAKYSFSIKETFEAGIVLLGWEVKSVRCGKINISNSYISLKNGEMYLVNSQFDPISKSNLYITYECNRIKKILLRKREITYLYSKLYKSHLTIIVLSIFFKKQWCKVKIGIAKGKTIKDKREHKKLSEWKKTQNRFVKRIRH</sequence>
<proteinExistence type="inferred from homology"/>
<accession>Q89AM9</accession>
<name>SSRP_BUCBP</name>
<feature type="chain" id="PRO_0000102922" description="SsrA-binding protein">
    <location>
        <begin position="1"/>
        <end position="158"/>
    </location>
</feature>
<organism>
    <name type="scientific">Buchnera aphidicola subsp. Baizongia pistaciae (strain Bp)</name>
    <dbReference type="NCBI Taxonomy" id="224915"/>
    <lineage>
        <taxon>Bacteria</taxon>
        <taxon>Pseudomonadati</taxon>
        <taxon>Pseudomonadota</taxon>
        <taxon>Gammaproteobacteria</taxon>
        <taxon>Enterobacterales</taxon>
        <taxon>Erwiniaceae</taxon>
        <taxon>Buchnera</taxon>
    </lineage>
</organism>
<gene>
    <name evidence="1" type="primary">smpB</name>
    <name type="ordered locus">bbp_235</name>
</gene>